<accession>Q58108</accession>
<evidence type="ECO:0000255" key="1">
    <source>
        <dbReference type="HAMAP-Rule" id="MF_00351"/>
    </source>
</evidence>
<evidence type="ECO:0000269" key="2">
    <source>
    </source>
</evidence>
<evidence type="ECO:0007829" key="3">
    <source>
        <dbReference type="PDB" id="1FBN"/>
    </source>
</evidence>
<dbReference type="EC" id="2.1.1.-" evidence="1"/>
<dbReference type="EMBL" id="L77117">
    <property type="protein sequence ID" value="AAB98690.1"/>
    <property type="molecule type" value="Genomic_DNA"/>
</dbReference>
<dbReference type="PIR" id="A64387">
    <property type="entry name" value="A64387"/>
</dbReference>
<dbReference type="RefSeq" id="WP_010870202.1">
    <property type="nucleotide sequence ID" value="NC_000909.1"/>
</dbReference>
<dbReference type="PDB" id="1FBN">
    <property type="method" value="X-ray"/>
    <property type="resolution" value="1.60 A"/>
    <property type="chains" value="A=1-230"/>
</dbReference>
<dbReference type="PDB" id="1G8S">
    <property type="method" value="X-ray"/>
    <property type="resolution" value="1.60 A"/>
    <property type="chains" value="A=1-230"/>
</dbReference>
<dbReference type="PDBsum" id="1FBN"/>
<dbReference type="PDBsum" id="1G8S"/>
<dbReference type="SMR" id="Q58108"/>
<dbReference type="FunCoup" id="Q58108">
    <property type="interactions" value="133"/>
</dbReference>
<dbReference type="IntAct" id="Q58108">
    <property type="interactions" value="2"/>
</dbReference>
<dbReference type="STRING" id="243232.MJ_0697"/>
<dbReference type="PaxDb" id="243232-MJ_0697"/>
<dbReference type="EnsemblBacteria" id="AAB98690">
    <property type="protein sequence ID" value="AAB98690"/>
    <property type="gene ID" value="MJ_0697"/>
</dbReference>
<dbReference type="GeneID" id="1451564"/>
<dbReference type="KEGG" id="mja:MJ_0697"/>
<dbReference type="eggNOG" id="arCOG00078">
    <property type="taxonomic scope" value="Archaea"/>
</dbReference>
<dbReference type="HOGENOM" id="CLU_059055_2_0_2"/>
<dbReference type="InParanoid" id="Q58108"/>
<dbReference type="OrthoDB" id="6244at2157"/>
<dbReference type="PhylomeDB" id="Q58108"/>
<dbReference type="EvolutionaryTrace" id="Q58108"/>
<dbReference type="Proteomes" id="UP000000805">
    <property type="component" value="Chromosome"/>
</dbReference>
<dbReference type="GO" id="GO:1990259">
    <property type="term" value="F:histone H2AQ104 methyltransferase activity"/>
    <property type="evidence" value="ECO:0000318"/>
    <property type="project" value="GO_Central"/>
</dbReference>
<dbReference type="GO" id="GO:0003723">
    <property type="term" value="F:RNA binding"/>
    <property type="evidence" value="ECO:0000318"/>
    <property type="project" value="GO_Central"/>
</dbReference>
<dbReference type="GO" id="GO:0008649">
    <property type="term" value="F:rRNA methyltransferase activity"/>
    <property type="evidence" value="ECO:0000318"/>
    <property type="project" value="GO_Central"/>
</dbReference>
<dbReference type="GO" id="GO:0000494">
    <property type="term" value="P:box C/D sno(s)RNA 3'-end processing"/>
    <property type="evidence" value="ECO:0000318"/>
    <property type="project" value="GO_Central"/>
</dbReference>
<dbReference type="GO" id="GO:0031167">
    <property type="term" value="P:rRNA methylation"/>
    <property type="evidence" value="ECO:0000318"/>
    <property type="project" value="GO_Central"/>
</dbReference>
<dbReference type="GO" id="GO:0008033">
    <property type="term" value="P:tRNA processing"/>
    <property type="evidence" value="ECO:0007669"/>
    <property type="project" value="UniProtKB-UniRule"/>
</dbReference>
<dbReference type="CDD" id="cd02440">
    <property type="entry name" value="AdoMet_MTases"/>
    <property type="match status" value="1"/>
</dbReference>
<dbReference type="FunFam" id="3.30.200.20:FF:000613">
    <property type="entry name" value="Fibrillarin-like rRNA/tRNA 2'-O-methyltransferase"/>
    <property type="match status" value="1"/>
</dbReference>
<dbReference type="FunFam" id="3.40.50.150:FF:000343">
    <property type="entry name" value="Fibrillarin-like rRNA/tRNA 2'-O-methyltransferase"/>
    <property type="match status" value="1"/>
</dbReference>
<dbReference type="Gene3D" id="3.30.200.20">
    <property type="entry name" value="Phosphorylase Kinase, domain 1"/>
    <property type="match status" value="1"/>
</dbReference>
<dbReference type="Gene3D" id="3.40.50.150">
    <property type="entry name" value="Vaccinia Virus protein VP39"/>
    <property type="match status" value="1"/>
</dbReference>
<dbReference type="HAMAP" id="MF_00351">
    <property type="entry name" value="RNA_methyltransf_FlpA"/>
    <property type="match status" value="1"/>
</dbReference>
<dbReference type="InterPro" id="IPR000692">
    <property type="entry name" value="Fibrillarin"/>
</dbReference>
<dbReference type="InterPro" id="IPR020813">
    <property type="entry name" value="Fibrillarin_CS"/>
</dbReference>
<dbReference type="InterPro" id="IPR029063">
    <property type="entry name" value="SAM-dependent_MTases_sf"/>
</dbReference>
<dbReference type="NCBIfam" id="NF003276">
    <property type="entry name" value="PRK04266.1-2"/>
    <property type="match status" value="1"/>
</dbReference>
<dbReference type="NCBIfam" id="NF003277">
    <property type="entry name" value="PRK04266.1-3"/>
    <property type="match status" value="1"/>
</dbReference>
<dbReference type="NCBIfam" id="NF003279">
    <property type="entry name" value="PRK04266.1-5"/>
    <property type="match status" value="1"/>
</dbReference>
<dbReference type="PANTHER" id="PTHR10335:SF17">
    <property type="entry name" value="FIBRILLARIN"/>
    <property type="match status" value="1"/>
</dbReference>
<dbReference type="PANTHER" id="PTHR10335">
    <property type="entry name" value="RRNA 2-O-METHYLTRANSFERASE FIBRILLARIN"/>
    <property type="match status" value="1"/>
</dbReference>
<dbReference type="Pfam" id="PF01269">
    <property type="entry name" value="Fibrillarin"/>
    <property type="match status" value="1"/>
</dbReference>
<dbReference type="PIRSF" id="PIRSF006540">
    <property type="entry name" value="Nop17p"/>
    <property type="match status" value="1"/>
</dbReference>
<dbReference type="PRINTS" id="PR00052">
    <property type="entry name" value="FIBRILLARIN"/>
</dbReference>
<dbReference type="SMART" id="SM01206">
    <property type="entry name" value="Fibrillarin"/>
    <property type="match status" value="1"/>
</dbReference>
<dbReference type="SUPFAM" id="SSF53335">
    <property type="entry name" value="S-adenosyl-L-methionine-dependent methyltransferases"/>
    <property type="match status" value="1"/>
</dbReference>
<dbReference type="PROSITE" id="PS00566">
    <property type="entry name" value="FIBRILLARIN"/>
    <property type="match status" value="1"/>
</dbReference>
<comment type="function">
    <text evidence="1">Involved in pre-rRNA and tRNA processing. Utilizes the methyl donor S-adenosyl-L-methionine to catalyze the site-specific 2'-hydroxyl methylation of ribose moieties in rRNA and tRNA. Site specificity is provided by a guide RNA that base pairs with the substrate. Methylation occurs at a characteristic distance from the sequence involved in base pairing with the guide RNA.</text>
</comment>
<comment type="subunit">
    <text evidence="1">Interacts with nop5. Component of box C/D small ribonucleoprotein (sRNP) particles that contain rpl7ae, FlpA and nop5, plus a guide RNA.</text>
</comment>
<comment type="mass spectrometry"/>
<comment type="similarity">
    <text evidence="1">Belongs to the methyltransferase superfamily. Fibrillarin family.</text>
</comment>
<keyword id="KW-0002">3D-structure</keyword>
<keyword id="KW-0489">Methyltransferase</keyword>
<keyword id="KW-1185">Reference proteome</keyword>
<keyword id="KW-0694">RNA-binding</keyword>
<keyword id="KW-0698">rRNA processing</keyword>
<keyword id="KW-0808">Transferase</keyword>
<keyword id="KW-0819">tRNA processing</keyword>
<reference key="1">
    <citation type="journal article" date="1996" name="Science">
        <title>Complete genome sequence of the methanogenic archaeon, Methanococcus jannaschii.</title>
        <authorList>
            <person name="Bult C.J."/>
            <person name="White O."/>
            <person name="Olsen G.J."/>
            <person name="Zhou L."/>
            <person name="Fleischmann R.D."/>
            <person name="Sutton G.G."/>
            <person name="Blake J.A."/>
            <person name="FitzGerald L.M."/>
            <person name="Clayton R.A."/>
            <person name="Gocayne J.D."/>
            <person name="Kerlavage A.R."/>
            <person name="Dougherty B.A."/>
            <person name="Tomb J.-F."/>
            <person name="Adams M.D."/>
            <person name="Reich C.I."/>
            <person name="Overbeek R."/>
            <person name="Kirkness E.F."/>
            <person name="Weinstock K.G."/>
            <person name="Merrick J.M."/>
            <person name="Glodek A."/>
            <person name="Scott J.L."/>
            <person name="Geoghagen N.S.M."/>
            <person name="Weidman J.F."/>
            <person name="Fuhrmann J.L."/>
            <person name="Nguyen D."/>
            <person name="Utterback T.R."/>
            <person name="Kelley J.M."/>
            <person name="Peterson J.D."/>
            <person name="Sadow P.W."/>
            <person name="Hanna M.C."/>
            <person name="Cotton M.D."/>
            <person name="Roberts K.M."/>
            <person name="Hurst M.A."/>
            <person name="Kaine B.P."/>
            <person name="Borodovsky M."/>
            <person name="Klenk H.-P."/>
            <person name="Fraser C.M."/>
            <person name="Smith H.O."/>
            <person name="Woese C.R."/>
            <person name="Venter J.C."/>
        </authorList>
    </citation>
    <scope>NUCLEOTIDE SEQUENCE [LARGE SCALE GENOMIC DNA]</scope>
    <source>
        <strain>ATCC 43067 / DSM 2661 / JAL-1 / JCM 10045 / NBRC 100440</strain>
    </source>
</reference>
<reference key="2">
    <citation type="journal article" date="1999" name="Acta Crystallogr. D">
        <title>Expression, purification and preliminary X-ray analysis of a fibrillarin homolog from Methanococcus jannaschii, a hyperthermophile.</title>
        <authorList>
            <person name="Wang H."/>
            <person name="Yokota H."/>
            <person name="Kim R."/>
            <person name="Kim S.-H."/>
        </authorList>
    </citation>
    <scope>X-RAY CRYSTALLOGRAPHY (1.8 ANGSTROMS)</scope>
    <scope>MASS SPECTROMETRY</scope>
    <source>
        <strain>ATCC 43067 / DSM 2661 / JAL-1 / JCM 10045 / NBRC 100440</strain>
    </source>
</reference>
<reference key="3">
    <citation type="journal article" date="2000" name="EMBO J.">
        <title>Crystal structure of a fibrillarin homologue from Methanococcus jannaschii, a hyperthermophile, at 1.6-A resolution.</title>
        <authorList>
            <person name="Wang H."/>
            <person name="Boisvert D."/>
            <person name="Kim K.K."/>
            <person name="Kim R."/>
            <person name="Kim S.-H."/>
        </authorList>
    </citation>
    <scope>X-RAY CRYSTALLOGRAPHY (1.6 ANGSTROMS)</scope>
    <scope>SUBUNIT</scope>
    <source>
        <strain>ATCC 43067 / DSM 2661 / JAL-1 / JCM 10045 / NBRC 100440</strain>
    </source>
</reference>
<name>FLPA_METJA</name>
<protein>
    <recommendedName>
        <fullName evidence="1">Fibrillarin-like rRNA/tRNA 2'-O-methyltransferase</fullName>
        <ecNumber evidence="1">2.1.1.-</ecNumber>
    </recommendedName>
</protein>
<feature type="chain" id="PRO_0000148533" description="Fibrillarin-like rRNA/tRNA 2'-O-methyltransferase">
    <location>
        <begin position="1"/>
        <end position="230"/>
    </location>
</feature>
<feature type="binding site" evidence="1">
    <location>
        <begin position="87"/>
        <end position="88"/>
    </location>
    <ligand>
        <name>S-adenosyl-L-methionine</name>
        <dbReference type="ChEBI" id="CHEBI:59789"/>
    </ligand>
</feature>
<feature type="binding site" evidence="1">
    <location>
        <begin position="105"/>
        <end position="106"/>
    </location>
    <ligand>
        <name>S-adenosyl-L-methionine</name>
        <dbReference type="ChEBI" id="CHEBI:59789"/>
    </ligand>
</feature>
<feature type="binding site" evidence="1">
    <location>
        <begin position="130"/>
        <end position="131"/>
    </location>
    <ligand>
        <name>S-adenosyl-L-methionine</name>
        <dbReference type="ChEBI" id="CHEBI:59789"/>
    </ligand>
</feature>
<feature type="binding site" evidence="1">
    <location>
        <begin position="150"/>
        <end position="153"/>
    </location>
    <ligand>
        <name>S-adenosyl-L-methionine</name>
        <dbReference type="ChEBI" id="CHEBI:59789"/>
    </ligand>
</feature>
<feature type="strand" evidence="3">
    <location>
        <begin position="5"/>
        <end position="9"/>
    </location>
</feature>
<feature type="turn" evidence="3">
    <location>
        <begin position="10"/>
        <end position="12"/>
    </location>
</feature>
<feature type="strand" evidence="3">
    <location>
        <begin position="13"/>
        <end position="17"/>
    </location>
</feature>
<feature type="strand" evidence="3">
    <location>
        <begin position="19"/>
        <end position="21"/>
    </location>
</feature>
<feature type="strand" evidence="3">
    <location>
        <begin position="25"/>
        <end position="28"/>
    </location>
</feature>
<feature type="strand" evidence="3">
    <location>
        <begin position="36"/>
        <end position="38"/>
    </location>
</feature>
<feature type="strand" evidence="3">
    <location>
        <begin position="41"/>
        <end position="44"/>
    </location>
</feature>
<feature type="strand" evidence="3">
    <location>
        <begin position="47"/>
        <end position="51"/>
    </location>
</feature>
<feature type="turn" evidence="3">
    <location>
        <begin position="54"/>
        <end position="56"/>
    </location>
</feature>
<feature type="helix" evidence="3">
    <location>
        <begin position="58"/>
        <end position="64"/>
    </location>
</feature>
<feature type="strand" evidence="3">
    <location>
        <begin position="77"/>
        <end position="82"/>
    </location>
</feature>
<feature type="helix" evidence="3">
    <location>
        <begin position="87"/>
        <end position="95"/>
    </location>
</feature>
<feature type="turn" evidence="3">
    <location>
        <begin position="96"/>
        <end position="98"/>
    </location>
</feature>
<feature type="strand" evidence="3">
    <location>
        <begin position="99"/>
        <end position="106"/>
    </location>
</feature>
<feature type="helix" evidence="3">
    <location>
        <begin position="108"/>
        <end position="117"/>
    </location>
</feature>
<feature type="turn" evidence="3">
    <location>
        <begin position="118"/>
        <end position="120"/>
    </location>
</feature>
<feature type="strand" evidence="3">
    <location>
        <begin position="124"/>
        <end position="128"/>
    </location>
</feature>
<feature type="helix" evidence="3">
    <location>
        <begin position="134"/>
        <end position="137"/>
    </location>
</feature>
<feature type="turn" evidence="3">
    <location>
        <begin position="138"/>
        <end position="140"/>
    </location>
</feature>
<feature type="strand" evidence="3">
    <location>
        <begin position="144"/>
        <end position="149"/>
    </location>
</feature>
<feature type="helix" evidence="3">
    <location>
        <begin position="156"/>
        <end position="167"/>
    </location>
</feature>
<feature type="strand" evidence="3">
    <location>
        <begin position="168"/>
        <end position="179"/>
    </location>
</feature>
<feature type="helix" evidence="3">
    <location>
        <begin position="180"/>
        <end position="182"/>
    </location>
</feature>
<feature type="strand" evidence="3">
    <location>
        <begin position="185"/>
        <end position="187"/>
    </location>
</feature>
<feature type="helix" evidence="3">
    <location>
        <begin position="189"/>
        <end position="203"/>
    </location>
</feature>
<feature type="strand" evidence="3">
    <location>
        <begin position="205"/>
        <end position="212"/>
    </location>
</feature>
<feature type="turn" evidence="3">
    <location>
        <begin position="214"/>
        <end position="216"/>
    </location>
</feature>
<feature type="strand" evidence="3">
    <location>
        <begin position="220"/>
        <end position="227"/>
    </location>
</feature>
<organism>
    <name type="scientific">Methanocaldococcus jannaschii (strain ATCC 43067 / DSM 2661 / JAL-1 / JCM 10045 / NBRC 100440)</name>
    <name type="common">Methanococcus jannaschii</name>
    <dbReference type="NCBI Taxonomy" id="243232"/>
    <lineage>
        <taxon>Archaea</taxon>
        <taxon>Methanobacteriati</taxon>
        <taxon>Methanobacteriota</taxon>
        <taxon>Methanomada group</taxon>
        <taxon>Methanococci</taxon>
        <taxon>Methanococcales</taxon>
        <taxon>Methanocaldococcaceae</taxon>
        <taxon>Methanocaldococcus</taxon>
    </lineage>
</organism>
<proteinExistence type="evidence at protein level"/>
<sequence>MEDIKIKEIFENIYEVDLGDGLKRIATKSIVKGKKVYDEKIIKIGDEEYRIWNPNKSKLAAAIIKGLKVMPIKRDSKILYLGASAGTTPSHVADIADKGIVYAIEYAPRIMRELLDACAERENIIPILGDANKPQEYANIVEKVDVIYEDVAQPNQAEILIKNAKWFLKKGGYGMIAIKARSIDVTKDPKEIFKEQKEILEAGGFKIVDEVDIEPFEKDHVMFVGIWEGK</sequence>
<gene>
    <name evidence="1" type="primary">flpA</name>
    <name type="ordered locus">MJ0697</name>
</gene>